<name>SYG_CLOPE</name>
<gene>
    <name evidence="1" type="primary">glyQS</name>
    <name type="synonym">glyS</name>
    <name type="ordered locus">CPE2464</name>
</gene>
<keyword id="KW-0030">Aminoacyl-tRNA synthetase</keyword>
<keyword id="KW-0067">ATP-binding</keyword>
<keyword id="KW-0963">Cytoplasm</keyword>
<keyword id="KW-0436">Ligase</keyword>
<keyword id="KW-0547">Nucleotide-binding</keyword>
<keyword id="KW-0648">Protein biosynthesis</keyword>
<keyword id="KW-1185">Reference proteome</keyword>
<evidence type="ECO:0000255" key="1">
    <source>
        <dbReference type="HAMAP-Rule" id="MF_00253"/>
    </source>
</evidence>
<dbReference type="EC" id="6.1.1.14" evidence="1"/>
<dbReference type="EMBL" id="BA000016">
    <property type="protein sequence ID" value="BAB82170.1"/>
    <property type="molecule type" value="Genomic_DNA"/>
</dbReference>
<dbReference type="RefSeq" id="WP_003450306.1">
    <property type="nucleotide sequence ID" value="NC_003366.1"/>
</dbReference>
<dbReference type="SMR" id="Q8XHL9"/>
<dbReference type="STRING" id="195102.gene:10491790"/>
<dbReference type="KEGG" id="cpe:CPE2464"/>
<dbReference type="HOGENOM" id="CLU_015515_2_1_9"/>
<dbReference type="Proteomes" id="UP000000818">
    <property type="component" value="Chromosome"/>
</dbReference>
<dbReference type="GO" id="GO:0005737">
    <property type="term" value="C:cytoplasm"/>
    <property type="evidence" value="ECO:0007669"/>
    <property type="project" value="UniProtKB-SubCell"/>
</dbReference>
<dbReference type="GO" id="GO:0005524">
    <property type="term" value="F:ATP binding"/>
    <property type="evidence" value="ECO:0007669"/>
    <property type="project" value="UniProtKB-UniRule"/>
</dbReference>
<dbReference type="GO" id="GO:0140096">
    <property type="term" value="F:catalytic activity, acting on a protein"/>
    <property type="evidence" value="ECO:0007669"/>
    <property type="project" value="UniProtKB-ARBA"/>
</dbReference>
<dbReference type="GO" id="GO:0004820">
    <property type="term" value="F:glycine-tRNA ligase activity"/>
    <property type="evidence" value="ECO:0000250"/>
    <property type="project" value="UniProtKB"/>
</dbReference>
<dbReference type="GO" id="GO:0046983">
    <property type="term" value="F:protein dimerization activity"/>
    <property type="evidence" value="ECO:0000250"/>
    <property type="project" value="UniProtKB"/>
</dbReference>
<dbReference type="GO" id="GO:0016740">
    <property type="term" value="F:transferase activity"/>
    <property type="evidence" value="ECO:0007669"/>
    <property type="project" value="UniProtKB-ARBA"/>
</dbReference>
<dbReference type="GO" id="GO:0006426">
    <property type="term" value="P:glycyl-tRNA aminoacylation"/>
    <property type="evidence" value="ECO:0007669"/>
    <property type="project" value="UniProtKB-UniRule"/>
</dbReference>
<dbReference type="CDD" id="cd00774">
    <property type="entry name" value="GlyRS-like_core"/>
    <property type="match status" value="1"/>
</dbReference>
<dbReference type="CDD" id="cd00858">
    <property type="entry name" value="GlyRS_anticodon"/>
    <property type="match status" value="1"/>
</dbReference>
<dbReference type="FunFam" id="3.40.50.800:FF:000002">
    <property type="entry name" value="Glycine--tRNA ligase"/>
    <property type="match status" value="1"/>
</dbReference>
<dbReference type="Gene3D" id="3.40.50.800">
    <property type="entry name" value="Anticodon-binding domain"/>
    <property type="match status" value="1"/>
</dbReference>
<dbReference type="Gene3D" id="3.30.930.10">
    <property type="entry name" value="Bira Bifunctional Protein, Domain 2"/>
    <property type="match status" value="1"/>
</dbReference>
<dbReference type="HAMAP" id="MF_00253_B">
    <property type="entry name" value="Gly_tRNA_synth_B"/>
    <property type="match status" value="1"/>
</dbReference>
<dbReference type="InterPro" id="IPR002314">
    <property type="entry name" value="aa-tRNA-synt_IIb"/>
</dbReference>
<dbReference type="InterPro" id="IPR006195">
    <property type="entry name" value="aa-tRNA-synth_II"/>
</dbReference>
<dbReference type="InterPro" id="IPR045864">
    <property type="entry name" value="aa-tRNA-synth_II/BPL/LPL"/>
</dbReference>
<dbReference type="InterPro" id="IPR004154">
    <property type="entry name" value="Anticodon-bd"/>
</dbReference>
<dbReference type="InterPro" id="IPR036621">
    <property type="entry name" value="Anticodon-bd_dom_sf"/>
</dbReference>
<dbReference type="InterPro" id="IPR027031">
    <property type="entry name" value="Gly-tRNA_synthase/POLG2"/>
</dbReference>
<dbReference type="InterPro" id="IPR022961">
    <property type="entry name" value="Gly_tRNA_ligase_bac"/>
</dbReference>
<dbReference type="InterPro" id="IPR033731">
    <property type="entry name" value="GlyRS-like_core"/>
</dbReference>
<dbReference type="InterPro" id="IPR002315">
    <property type="entry name" value="tRNA-synt_gly"/>
</dbReference>
<dbReference type="NCBIfam" id="TIGR00389">
    <property type="entry name" value="glyS_dimeric"/>
    <property type="match status" value="1"/>
</dbReference>
<dbReference type="NCBIfam" id="NF003211">
    <property type="entry name" value="PRK04173.1"/>
    <property type="match status" value="1"/>
</dbReference>
<dbReference type="PANTHER" id="PTHR10745:SF8">
    <property type="entry name" value="DNA POLYMERASE SUBUNIT GAMMA-2, MITOCHONDRIAL"/>
    <property type="match status" value="1"/>
</dbReference>
<dbReference type="PANTHER" id="PTHR10745">
    <property type="entry name" value="GLYCYL-TRNA SYNTHETASE/DNA POLYMERASE SUBUNIT GAMMA-2"/>
    <property type="match status" value="1"/>
</dbReference>
<dbReference type="Pfam" id="PF03129">
    <property type="entry name" value="HGTP_anticodon"/>
    <property type="match status" value="1"/>
</dbReference>
<dbReference type="Pfam" id="PF00587">
    <property type="entry name" value="tRNA-synt_2b"/>
    <property type="match status" value="1"/>
</dbReference>
<dbReference type="PRINTS" id="PR01043">
    <property type="entry name" value="TRNASYNTHGLY"/>
</dbReference>
<dbReference type="SUPFAM" id="SSF52954">
    <property type="entry name" value="Class II aaRS ABD-related"/>
    <property type="match status" value="1"/>
</dbReference>
<dbReference type="SUPFAM" id="SSF55681">
    <property type="entry name" value="Class II aaRS and biotin synthetases"/>
    <property type="match status" value="1"/>
</dbReference>
<dbReference type="PROSITE" id="PS50862">
    <property type="entry name" value="AA_TRNA_LIGASE_II"/>
    <property type="match status" value="1"/>
</dbReference>
<feature type="chain" id="PRO_0000072953" description="Glycine--tRNA ligase">
    <location>
        <begin position="1"/>
        <end position="467"/>
    </location>
</feature>
<feature type="binding site" evidence="1">
    <location>
        <position position="100"/>
    </location>
    <ligand>
        <name>substrate</name>
    </ligand>
</feature>
<feature type="binding site" evidence="1">
    <location>
        <position position="175"/>
    </location>
    <ligand>
        <name>substrate</name>
    </ligand>
</feature>
<feature type="binding site" evidence="1">
    <location>
        <begin position="207"/>
        <end position="209"/>
    </location>
    <ligand>
        <name>ATP</name>
        <dbReference type="ChEBI" id="CHEBI:30616"/>
    </ligand>
</feature>
<feature type="binding site" evidence="1">
    <location>
        <begin position="217"/>
        <end position="222"/>
    </location>
    <ligand>
        <name>ATP</name>
        <dbReference type="ChEBI" id="CHEBI:30616"/>
    </ligand>
</feature>
<feature type="binding site" evidence="1">
    <location>
        <begin position="222"/>
        <end position="226"/>
    </location>
    <ligand>
        <name>substrate</name>
    </ligand>
</feature>
<feature type="binding site" evidence="1">
    <location>
        <begin position="291"/>
        <end position="292"/>
    </location>
    <ligand>
        <name>ATP</name>
        <dbReference type="ChEBI" id="CHEBI:30616"/>
    </ligand>
</feature>
<feature type="binding site" evidence="1">
    <location>
        <begin position="331"/>
        <end position="335"/>
    </location>
    <ligand>
        <name>substrate</name>
    </ligand>
</feature>
<feature type="binding site" evidence="1">
    <location>
        <begin position="335"/>
        <end position="338"/>
    </location>
    <ligand>
        <name>ATP</name>
        <dbReference type="ChEBI" id="CHEBI:30616"/>
    </ligand>
</feature>
<comment type="function">
    <text evidence="1">Catalyzes the attachment of glycine to tRNA(Gly).</text>
</comment>
<comment type="catalytic activity">
    <reaction evidence="1">
        <text>tRNA(Gly) + glycine + ATP = glycyl-tRNA(Gly) + AMP + diphosphate</text>
        <dbReference type="Rhea" id="RHEA:16013"/>
        <dbReference type="Rhea" id="RHEA-COMP:9664"/>
        <dbReference type="Rhea" id="RHEA-COMP:9683"/>
        <dbReference type="ChEBI" id="CHEBI:30616"/>
        <dbReference type="ChEBI" id="CHEBI:33019"/>
        <dbReference type="ChEBI" id="CHEBI:57305"/>
        <dbReference type="ChEBI" id="CHEBI:78442"/>
        <dbReference type="ChEBI" id="CHEBI:78522"/>
        <dbReference type="ChEBI" id="CHEBI:456215"/>
        <dbReference type="EC" id="6.1.1.14"/>
    </reaction>
</comment>
<comment type="subunit">
    <text evidence="1">Homodimer.</text>
</comment>
<comment type="subcellular location">
    <subcellularLocation>
        <location evidence="1">Cytoplasm</location>
    </subcellularLocation>
</comment>
<comment type="similarity">
    <text evidence="1">Belongs to the class-II aminoacyl-tRNA synthetase family.</text>
</comment>
<reference key="1">
    <citation type="journal article" date="2002" name="Proc. Natl. Acad. Sci. U.S.A.">
        <title>Complete genome sequence of Clostridium perfringens, an anaerobic flesh-eater.</title>
        <authorList>
            <person name="Shimizu T."/>
            <person name="Ohtani K."/>
            <person name="Hirakawa H."/>
            <person name="Ohshima K."/>
            <person name="Yamashita A."/>
            <person name="Shiba T."/>
            <person name="Ogasawara N."/>
            <person name="Hattori M."/>
            <person name="Kuhara S."/>
            <person name="Hayashi H."/>
        </authorList>
    </citation>
    <scope>NUCLEOTIDE SEQUENCE [LARGE SCALE GENOMIC DNA]</scope>
    <source>
        <strain>13 / Type A</strain>
    </source>
</reference>
<sequence length="467" mass="53707">MAVEKTMDKIVALCKNRGFIFPGSEIYGGLANSWDYGPLGVEFKNNVKRAWWKKFVQESKYNVGLDSAILMNREVWVASGHVGGFSDPLMDCKECKARFRADKLVEDHMTANGAEVATADGWSNEELMDYITKNNIVCPKCGKLNYTDIRKFNLMFKTFQGITEDSKNEVYLRPETAQGIFVNFKSVQRTTRKKVPFGIAQIGKSFRNEITPGNFTFRTREFEQMELEFFCKPGTDLEWFNFWKDSCWNFLLNLGMKEENIRMRDHGEEELSFYSNATSDIEYLFPFGWGELWGIADRTDYDLNKHAEHSGQDMTYLDPTTNEKYVPYVIEPSLGADRVALAFLVEAYDEEELEGANGKVDVRTVMHLHPALAPFKAAILPLSKKLSEKADEVYAELSKHFNVDYDETGSIGKRYRRQDEIGTPFCITVDFDTLEDGCVTVRDRDNMEQQRVKIEDVRAIIEKSLEF</sequence>
<proteinExistence type="inferred from homology"/>
<protein>
    <recommendedName>
        <fullName evidence="1">Glycine--tRNA ligase</fullName>
        <ecNumber evidence="1">6.1.1.14</ecNumber>
    </recommendedName>
    <alternativeName>
        <fullName evidence="1">Glycyl-tRNA synthetase</fullName>
        <shortName evidence="1">GlyRS</shortName>
    </alternativeName>
</protein>
<organism>
    <name type="scientific">Clostridium perfringens (strain 13 / Type A)</name>
    <dbReference type="NCBI Taxonomy" id="195102"/>
    <lineage>
        <taxon>Bacteria</taxon>
        <taxon>Bacillati</taxon>
        <taxon>Bacillota</taxon>
        <taxon>Clostridia</taxon>
        <taxon>Eubacteriales</taxon>
        <taxon>Clostridiaceae</taxon>
        <taxon>Clostridium</taxon>
    </lineage>
</organism>
<accession>Q8XHL9</accession>